<proteinExistence type="inferred from homology"/>
<name>RECR_CLOK5</name>
<protein>
    <recommendedName>
        <fullName evidence="1">Recombination protein RecR</fullName>
    </recommendedName>
</protein>
<evidence type="ECO:0000255" key="1">
    <source>
        <dbReference type="HAMAP-Rule" id="MF_00017"/>
    </source>
</evidence>
<accession>A5N3V7</accession>
<keyword id="KW-0227">DNA damage</keyword>
<keyword id="KW-0233">DNA recombination</keyword>
<keyword id="KW-0234">DNA repair</keyword>
<keyword id="KW-0479">Metal-binding</keyword>
<keyword id="KW-1185">Reference proteome</keyword>
<keyword id="KW-0862">Zinc</keyword>
<keyword id="KW-0863">Zinc-finger</keyword>
<gene>
    <name evidence="1" type="primary">recR</name>
    <name type="ordered locus">CKL_3825</name>
</gene>
<sequence length="198" mass="21941">MDFYPVAIEKLIEEFAKLPGIGRKTAQRLTLHVLNLPADEVREFAKALVKARGTIKYCSICGNFTDSDPCAICSNPNRDKSIICVIEEPKDIMSMERIKEYNGVYHVLHGNISPMAGRGPEDIKLRELIRRINGDVNEVIVATNPNVEGEATAMYISKILKHLGVKVTRIAHGIPVGGNLEYADEVTLLKALEGRTEI</sequence>
<reference key="1">
    <citation type="journal article" date="2008" name="Proc. Natl. Acad. Sci. U.S.A.">
        <title>The genome of Clostridium kluyveri, a strict anaerobe with unique metabolic features.</title>
        <authorList>
            <person name="Seedorf H."/>
            <person name="Fricke W.F."/>
            <person name="Veith B."/>
            <person name="Brueggemann H."/>
            <person name="Liesegang H."/>
            <person name="Strittmatter A."/>
            <person name="Miethke M."/>
            <person name="Buckel W."/>
            <person name="Hinderberger J."/>
            <person name="Li F."/>
            <person name="Hagemeier C."/>
            <person name="Thauer R.K."/>
            <person name="Gottschalk G."/>
        </authorList>
    </citation>
    <scope>NUCLEOTIDE SEQUENCE [LARGE SCALE GENOMIC DNA]</scope>
    <source>
        <strain>ATCC 8527 / DSM 555 / NBRC 12016 / NCIMB 10680 / K1</strain>
    </source>
</reference>
<comment type="function">
    <text evidence="1">May play a role in DNA repair. It seems to be involved in an RecBC-independent recombinational process of DNA repair. It may act with RecF and RecO.</text>
</comment>
<comment type="similarity">
    <text evidence="1">Belongs to the RecR family.</text>
</comment>
<feature type="chain" id="PRO_1000074115" description="Recombination protein RecR">
    <location>
        <begin position="1"/>
        <end position="198"/>
    </location>
</feature>
<feature type="domain" description="Toprim" evidence="1">
    <location>
        <begin position="81"/>
        <end position="175"/>
    </location>
</feature>
<feature type="zinc finger region" description="C4-type" evidence="1">
    <location>
        <begin position="58"/>
        <end position="73"/>
    </location>
</feature>
<dbReference type="EMBL" id="CP000673">
    <property type="protein sequence ID" value="EDK35803.1"/>
    <property type="molecule type" value="Genomic_DNA"/>
</dbReference>
<dbReference type="RefSeq" id="WP_012104138.1">
    <property type="nucleotide sequence ID" value="NC_009706.1"/>
</dbReference>
<dbReference type="SMR" id="A5N3V7"/>
<dbReference type="STRING" id="431943.CKL_3825"/>
<dbReference type="KEGG" id="ckl:CKL_3825"/>
<dbReference type="eggNOG" id="COG0353">
    <property type="taxonomic scope" value="Bacteria"/>
</dbReference>
<dbReference type="HOGENOM" id="CLU_060739_1_0_9"/>
<dbReference type="Proteomes" id="UP000002411">
    <property type="component" value="Chromosome"/>
</dbReference>
<dbReference type="GO" id="GO:0003677">
    <property type="term" value="F:DNA binding"/>
    <property type="evidence" value="ECO:0007669"/>
    <property type="project" value="UniProtKB-UniRule"/>
</dbReference>
<dbReference type="GO" id="GO:0008270">
    <property type="term" value="F:zinc ion binding"/>
    <property type="evidence" value="ECO:0007669"/>
    <property type="project" value="UniProtKB-KW"/>
</dbReference>
<dbReference type="GO" id="GO:0006310">
    <property type="term" value="P:DNA recombination"/>
    <property type="evidence" value="ECO:0007669"/>
    <property type="project" value="UniProtKB-UniRule"/>
</dbReference>
<dbReference type="GO" id="GO:0006281">
    <property type="term" value="P:DNA repair"/>
    <property type="evidence" value="ECO:0007669"/>
    <property type="project" value="UniProtKB-UniRule"/>
</dbReference>
<dbReference type="CDD" id="cd01025">
    <property type="entry name" value="TOPRIM_recR"/>
    <property type="match status" value="1"/>
</dbReference>
<dbReference type="Gene3D" id="3.30.60.80">
    <property type="match status" value="1"/>
</dbReference>
<dbReference type="Gene3D" id="3.40.1360.10">
    <property type="match status" value="1"/>
</dbReference>
<dbReference type="Gene3D" id="6.10.250.240">
    <property type="match status" value="1"/>
</dbReference>
<dbReference type="Gene3D" id="1.10.8.420">
    <property type="entry name" value="RecR Domain 1"/>
    <property type="match status" value="1"/>
</dbReference>
<dbReference type="HAMAP" id="MF_00017">
    <property type="entry name" value="RecR"/>
    <property type="match status" value="1"/>
</dbReference>
<dbReference type="InterPro" id="IPR000093">
    <property type="entry name" value="DNA_Rcmb_RecR"/>
</dbReference>
<dbReference type="InterPro" id="IPR023627">
    <property type="entry name" value="Rcmb_RecR"/>
</dbReference>
<dbReference type="InterPro" id="IPR015967">
    <property type="entry name" value="Rcmb_RecR_Znf"/>
</dbReference>
<dbReference type="InterPro" id="IPR006171">
    <property type="entry name" value="TOPRIM_dom"/>
</dbReference>
<dbReference type="InterPro" id="IPR034137">
    <property type="entry name" value="TOPRIM_RecR"/>
</dbReference>
<dbReference type="NCBIfam" id="TIGR00615">
    <property type="entry name" value="recR"/>
    <property type="match status" value="1"/>
</dbReference>
<dbReference type="PANTHER" id="PTHR30446">
    <property type="entry name" value="RECOMBINATION PROTEIN RECR"/>
    <property type="match status" value="1"/>
</dbReference>
<dbReference type="PANTHER" id="PTHR30446:SF0">
    <property type="entry name" value="RECOMBINATION PROTEIN RECR"/>
    <property type="match status" value="1"/>
</dbReference>
<dbReference type="Pfam" id="PF21175">
    <property type="entry name" value="RecR_C"/>
    <property type="match status" value="1"/>
</dbReference>
<dbReference type="Pfam" id="PF21176">
    <property type="entry name" value="RecR_HhH"/>
    <property type="match status" value="1"/>
</dbReference>
<dbReference type="Pfam" id="PF02132">
    <property type="entry name" value="RecR_ZnF"/>
    <property type="match status" value="1"/>
</dbReference>
<dbReference type="Pfam" id="PF13662">
    <property type="entry name" value="Toprim_4"/>
    <property type="match status" value="1"/>
</dbReference>
<dbReference type="SMART" id="SM00493">
    <property type="entry name" value="TOPRIM"/>
    <property type="match status" value="1"/>
</dbReference>
<dbReference type="SUPFAM" id="SSF111304">
    <property type="entry name" value="Recombination protein RecR"/>
    <property type="match status" value="1"/>
</dbReference>
<dbReference type="PROSITE" id="PS01300">
    <property type="entry name" value="RECR"/>
    <property type="match status" value="1"/>
</dbReference>
<dbReference type="PROSITE" id="PS50880">
    <property type="entry name" value="TOPRIM"/>
    <property type="match status" value="1"/>
</dbReference>
<organism>
    <name type="scientific">Clostridium kluyveri (strain ATCC 8527 / DSM 555 / NBRC 12016 / NCIMB 10680 / K1)</name>
    <dbReference type="NCBI Taxonomy" id="431943"/>
    <lineage>
        <taxon>Bacteria</taxon>
        <taxon>Bacillati</taxon>
        <taxon>Bacillota</taxon>
        <taxon>Clostridia</taxon>
        <taxon>Eubacteriales</taxon>
        <taxon>Clostridiaceae</taxon>
        <taxon>Clostridium</taxon>
    </lineage>
</organism>